<sequence>MQLNPSEISELIKAKIENLGASSELRTQGTIVSVTDGIVRIHGLSDVMSGEMIEMPGNTFGVALNLERDSVGAVILGDYEHIKEGDVAKCTGRILEVPVGRGLLGRVVNSLGQPIDGKGPIAADSSMPIERIAPGVIERKSVDQPVQTGLKSIDAMVPVGRGQRELIIGDRQTGKTAVAIDAIINQKGTGVKCIYVAVGQKASSVANVVRKLEEHGAMEHTIVVAATASDAAAMQYIAPYSGCTMGEYFRDIGEDALIVYDDLTKQAWAYRQVSLLLRRPPGREAYPGDVFYLHSRLLERAARVNADYVEKLTGGAVKGKTGSLTALPIIETQAGDVSAFVPTNVISITDGQIFLETDLFNAGIRPAINAGLSVSRVGGAAQTKVVKKLGGGVRLALAQYRELAAFAQFASDLDEATRKQLERGRRVTELMKQAQYSPMSVSQMALTLFAVNNGYMDEVEVNKILAFEAALQAFMKSKYAAIMDTIETSGNLDGETEKALTAAVEEFKKTGVY</sequence>
<accession>Q3SF64</accession>
<gene>
    <name evidence="1" type="primary">atpA</name>
    <name type="ordered locus">Tbd_2799</name>
</gene>
<name>ATPA_THIDA</name>
<organism>
    <name type="scientific">Thiobacillus denitrificans (strain ATCC 25259 / T1)</name>
    <dbReference type="NCBI Taxonomy" id="292415"/>
    <lineage>
        <taxon>Bacteria</taxon>
        <taxon>Pseudomonadati</taxon>
        <taxon>Pseudomonadota</taxon>
        <taxon>Betaproteobacteria</taxon>
        <taxon>Nitrosomonadales</taxon>
        <taxon>Thiobacillaceae</taxon>
        <taxon>Thiobacillus</taxon>
    </lineage>
</organism>
<evidence type="ECO:0000255" key="1">
    <source>
        <dbReference type="HAMAP-Rule" id="MF_01346"/>
    </source>
</evidence>
<dbReference type="EC" id="7.1.2.2" evidence="1"/>
<dbReference type="EMBL" id="CP000116">
    <property type="protein sequence ID" value="AAZ98752.1"/>
    <property type="molecule type" value="Genomic_DNA"/>
</dbReference>
<dbReference type="RefSeq" id="WP_011313311.1">
    <property type="nucleotide sequence ID" value="NC_007404.1"/>
</dbReference>
<dbReference type="SMR" id="Q3SF64"/>
<dbReference type="STRING" id="292415.Tbd_2799"/>
<dbReference type="KEGG" id="tbd:Tbd_2799"/>
<dbReference type="eggNOG" id="COG0056">
    <property type="taxonomic scope" value="Bacteria"/>
</dbReference>
<dbReference type="HOGENOM" id="CLU_010091_2_1_4"/>
<dbReference type="OrthoDB" id="9803053at2"/>
<dbReference type="Proteomes" id="UP000008291">
    <property type="component" value="Chromosome"/>
</dbReference>
<dbReference type="GO" id="GO:0005886">
    <property type="term" value="C:plasma membrane"/>
    <property type="evidence" value="ECO:0007669"/>
    <property type="project" value="UniProtKB-SubCell"/>
</dbReference>
<dbReference type="GO" id="GO:0045259">
    <property type="term" value="C:proton-transporting ATP synthase complex"/>
    <property type="evidence" value="ECO:0007669"/>
    <property type="project" value="UniProtKB-KW"/>
</dbReference>
<dbReference type="GO" id="GO:0043531">
    <property type="term" value="F:ADP binding"/>
    <property type="evidence" value="ECO:0007669"/>
    <property type="project" value="TreeGrafter"/>
</dbReference>
<dbReference type="GO" id="GO:0005524">
    <property type="term" value="F:ATP binding"/>
    <property type="evidence" value="ECO:0007669"/>
    <property type="project" value="UniProtKB-UniRule"/>
</dbReference>
<dbReference type="GO" id="GO:0046933">
    <property type="term" value="F:proton-transporting ATP synthase activity, rotational mechanism"/>
    <property type="evidence" value="ECO:0007669"/>
    <property type="project" value="UniProtKB-UniRule"/>
</dbReference>
<dbReference type="CDD" id="cd18113">
    <property type="entry name" value="ATP-synt_F1_alpha_C"/>
    <property type="match status" value="1"/>
</dbReference>
<dbReference type="CDD" id="cd18116">
    <property type="entry name" value="ATP-synt_F1_alpha_N"/>
    <property type="match status" value="1"/>
</dbReference>
<dbReference type="CDD" id="cd01132">
    <property type="entry name" value="F1-ATPase_alpha_CD"/>
    <property type="match status" value="1"/>
</dbReference>
<dbReference type="FunFam" id="1.20.150.20:FF:000001">
    <property type="entry name" value="ATP synthase subunit alpha"/>
    <property type="match status" value="1"/>
</dbReference>
<dbReference type="FunFam" id="2.40.30.20:FF:000001">
    <property type="entry name" value="ATP synthase subunit alpha"/>
    <property type="match status" value="1"/>
</dbReference>
<dbReference type="FunFam" id="3.40.50.300:FF:000002">
    <property type="entry name" value="ATP synthase subunit alpha"/>
    <property type="match status" value="1"/>
</dbReference>
<dbReference type="Gene3D" id="2.40.30.20">
    <property type="match status" value="1"/>
</dbReference>
<dbReference type="Gene3D" id="1.20.150.20">
    <property type="entry name" value="ATP synthase alpha/beta chain, C-terminal domain"/>
    <property type="match status" value="1"/>
</dbReference>
<dbReference type="Gene3D" id="3.40.50.300">
    <property type="entry name" value="P-loop containing nucleotide triphosphate hydrolases"/>
    <property type="match status" value="1"/>
</dbReference>
<dbReference type="HAMAP" id="MF_01346">
    <property type="entry name" value="ATP_synth_alpha_bact"/>
    <property type="match status" value="1"/>
</dbReference>
<dbReference type="InterPro" id="IPR023366">
    <property type="entry name" value="ATP_synth_asu-like_sf"/>
</dbReference>
<dbReference type="InterPro" id="IPR000793">
    <property type="entry name" value="ATP_synth_asu_C"/>
</dbReference>
<dbReference type="InterPro" id="IPR038376">
    <property type="entry name" value="ATP_synth_asu_C_sf"/>
</dbReference>
<dbReference type="InterPro" id="IPR033732">
    <property type="entry name" value="ATP_synth_F1_a_nt-bd_dom"/>
</dbReference>
<dbReference type="InterPro" id="IPR005294">
    <property type="entry name" value="ATP_synth_F1_asu"/>
</dbReference>
<dbReference type="InterPro" id="IPR020003">
    <property type="entry name" value="ATPase_a/bsu_AS"/>
</dbReference>
<dbReference type="InterPro" id="IPR004100">
    <property type="entry name" value="ATPase_F1/V1/A1_a/bsu_N"/>
</dbReference>
<dbReference type="InterPro" id="IPR036121">
    <property type="entry name" value="ATPase_F1/V1/A1_a/bsu_N_sf"/>
</dbReference>
<dbReference type="InterPro" id="IPR000194">
    <property type="entry name" value="ATPase_F1/V1/A1_a/bsu_nucl-bd"/>
</dbReference>
<dbReference type="InterPro" id="IPR027417">
    <property type="entry name" value="P-loop_NTPase"/>
</dbReference>
<dbReference type="NCBIfam" id="TIGR00962">
    <property type="entry name" value="atpA"/>
    <property type="match status" value="1"/>
</dbReference>
<dbReference type="NCBIfam" id="NF009884">
    <property type="entry name" value="PRK13343.1"/>
    <property type="match status" value="1"/>
</dbReference>
<dbReference type="PANTHER" id="PTHR48082">
    <property type="entry name" value="ATP SYNTHASE SUBUNIT ALPHA, MITOCHONDRIAL"/>
    <property type="match status" value="1"/>
</dbReference>
<dbReference type="PANTHER" id="PTHR48082:SF2">
    <property type="entry name" value="ATP SYNTHASE SUBUNIT ALPHA, MITOCHONDRIAL"/>
    <property type="match status" value="1"/>
</dbReference>
<dbReference type="Pfam" id="PF00006">
    <property type="entry name" value="ATP-synt_ab"/>
    <property type="match status" value="1"/>
</dbReference>
<dbReference type="Pfam" id="PF00306">
    <property type="entry name" value="ATP-synt_ab_C"/>
    <property type="match status" value="1"/>
</dbReference>
<dbReference type="Pfam" id="PF02874">
    <property type="entry name" value="ATP-synt_ab_N"/>
    <property type="match status" value="1"/>
</dbReference>
<dbReference type="PIRSF" id="PIRSF039088">
    <property type="entry name" value="F_ATPase_subunit_alpha"/>
    <property type="match status" value="1"/>
</dbReference>
<dbReference type="SUPFAM" id="SSF47917">
    <property type="entry name" value="C-terminal domain of alpha and beta subunits of F1 ATP synthase"/>
    <property type="match status" value="1"/>
</dbReference>
<dbReference type="SUPFAM" id="SSF50615">
    <property type="entry name" value="N-terminal domain of alpha and beta subunits of F1 ATP synthase"/>
    <property type="match status" value="1"/>
</dbReference>
<dbReference type="SUPFAM" id="SSF52540">
    <property type="entry name" value="P-loop containing nucleoside triphosphate hydrolases"/>
    <property type="match status" value="1"/>
</dbReference>
<dbReference type="PROSITE" id="PS00152">
    <property type="entry name" value="ATPASE_ALPHA_BETA"/>
    <property type="match status" value="1"/>
</dbReference>
<comment type="function">
    <text evidence="1">Produces ATP from ADP in the presence of a proton gradient across the membrane. The alpha chain is a regulatory subunit.</text>
</comment>
<comment type="catalytic activity">
    <reaction evidence="1">
        <text>ATP + H2O + 4 H(+)(in) = ADP + phosphate + 5 H(+)(out)</text>
        <dbReference type="Rhea" id="RHEA:57720"/>
        <dbReference type="ChEBI" id="CHEBI:15377"/>
        <dbReference type="ChEBI" id="CHEBI:15378"/>
        <dbReference type="ChEBI" id="CHEBI:30616"/>
        <dbReference type="ChEBI" id="CHEBI:43474"/>
        <dbReference type="ChEBI" id="CHEBI:456216"/>
        <dbReference type="EC" id="7.1.2.2"/>
    </reaction>
</comment>
<comment type="subunit">
    <text evidence="1">F-type ATPases have 2 components, CF(1) - the catalytic core - and CF(0) - the membrane proton channel. CF(1) has five subunits: alpha(3), beta(3), gamma(1), delta(1), epsilon(1). CF(0) has three main subunits: a(1), b(2) and c(9-12). The alpha and beta chains form an alternating ring which encloses part of the gamma chain. CF(1) is attached to CF(0) by a central stalk formed by the gamma and epsilon chains, while a peripheral stalk is formed by the delta and b chains.</text>
</comment>
<comment type="subcellular location">
    <subcellularLocation>
        <location evidence="1">Cell inner membrane</location>
        <topology evidence="1">Peripheral membrane protein</topology>
    </subcellularLocation>
</comment>
<comment type="similarity">
    <text evidence="1">Belongs to the ATPase alpha/beta chains family.</text>
</comment>
<protein>
    <recommendedName>
        <fullName evidence="1">ATP synthase subunit alpha</fullName>
        <ecNumber evidence="1">7.1.2.2</ecNumber>
    </recommendedName>
    <alternativeName>
        <fullName evidence="1">ATP synthase F1 sector subunit alpha</fullName>
    </alternativeName>
    <alternativeName>
        <fullName evidence="1">F-ATPase subunit alpha</fullName>
    </alternativeName>
</protein>
<reference key="1">
    <citation type="journal article" date="2006" name="J. Bacteriol.">
        <title>The genome sequence of the obligately chemolithoautotrophic, facultatively anaerobic bacterium Thiobacillus denitrificans.</title>
        <authorList>
            <person name="Beller H.R."/>
            <person name="Chain P.S."/>
            <person name="Letain T.E."/>
            <person name="Chakicherla A."/>
            <person name="Larimer F.W."/>
            <person name="Richardson P.M."/>
            <person name="Coleman M.A."/>
            <person name="Wood A.P."/>
            <person name="Kelly D.P."/>
        </authorList>
    </citation>
    <scope>NUCLEOTIDE SEQUENCE [LARGE SCALE GENOMIC DNA]</scope>
    <source>
        <strain>ATCC 25259 / T1</strain>
    </source>
</reference>
<feature type="chain" id="PRO_0000238388" description="ATP synthase subunit alpha">
    <location>
        <begin position="1"/>
        <end position="513"/>
    </location>
</feature>
<feature type="binding site" evidence="1">
    <location>
        <begin position="169"/>
        <end position="176"/>
    </location>
    <ligand>
        <name>ATP</name>
        <dbReference type="ChEBI" id="CHEBI:30616"/>
    </ligand>
</feature>
<feature type="site" description="Required for activity" evidence="1">
    <location>
        <position position="373"/>
    </location>
</feature>
<keyword id="KW-0066">ATP synthesis</keyword>
<keyword id="KW-0067">ATP-binding</keyword>
<keyword id="KW-0997">Cell inner membrane</keyword>
<keyword id="KW-1003">Cell membrane</keyword>
<keyword id="KW-0139">CF(1)</keyword>
<keyword id="KW-0375">Hydrogen ion transport</keyword>
<keyword id="KW-0406">Ion transport</keyword>
<keyword id="KW-0472">Membrane</keyword>
<keyword id="KW-0547">Nucleotide-binding</keyword>
<keyword id="KW-1185">Reference proteome</keyword>
<keyword id="KW-1278">Translocase</keyword>
<keyword id="KW-0813">Transport</keyword>
<proteinExistence type="inferred from homology"/>